<gene>
    <name type="primary">plb2</name>
    <name evidence="5" type="ORF">SPAC1786.02</name>
</gene>
<reference key="1">
    <citation type="journal article" date="2002" name="Nature">
        <title>The genome sequence of Schizosaccharomyces pombe.</title>
        <authorList>
            <person name="Wood V."/>
            <person name="Gwilliam R."/>
            <person name="Rajandream M.A."/>
            <person name="Lyne M.H."/>
            <person name="Lyne R."/>
            <person name="Stewart A."/>
            <person name="Sgouros J.G."/>
            <person name="Peat N."/>
            <person name="Hayles J."/>
            <person name="Baker S.G."/>
            <person name="Basham D."/>
            <person name="Bowman S."/>
            <person name="Brooks K."/>
            <person name="Brown D."/>
            <person name="Brown S."/>
            <person name="Chillingworth T."/>
            <person name="Churcher C.M."/>
            <person name="Collins M."/>
            <person name="Connor R."/>
            <person name="Cronin A."/>
            <person name="Davis P."/>
            <person name="Feltwell T."/>
            <person name="Fraser A."/>
            <person name="Gentles S."/>
            <person name="Goble A."/>
            <person name="Hamlin N."/>
            <person name="Harris D.E."/>
            <person name="Hidalgo J."/>
            <person name="Hodgson G."/>
            <person name="Holroyd S."/>
            <person name="Hornsby T."/>
            <person name="Howarth S."/>
            <person name="Huckle E.J."/>
            <person name="Hunt S."/>
            <person name="Jagels K."/>
            <person name="James K.D."/>
            <person name="Jones L."/>
            <person name="Jones M."/>
            <person name="Leather S."/>
            <person name="McDonald S."/>
            <person name="McLean J."/>
            <person name="Mooney P."/>
            <person name="Moule S."/>
            <person name="Mungall K.L."/>
            <person name="Murphy L.D."/>
            <person name="Niblett D."/>
            <person name="Odell C."/>
            <person name="Oliver K."/>
            <person name="O'Neil S."/>
            <person name="Pearson D."/>
            <person name="Quail M.A."/>
            <person name="Rabbinowitsch E."/>
            <person name="Rutherford K.M."/>
            <person name="Rutter S."/>
            <person name="Saunders D."/>
            <person name="Seeger K."/>
            <person name="Sharp S."/>
            <person name="Skelton J."/>
            <person name="Simmonds M.N."/>
            <person name="Squares R."/>
            <person name="Squares S."/>
            <person name="Stevens K."/>
            <person name="Taylor K."/>
            <person name="Taylor R.G."/>
            <person name="Tivey A."/>
            <person name="Walsh S.V."/>
            <person name="Warren T."/>
            <person name="Whitehead S."/>
            <person name="Woodward J.R."/>
            <person name="Volckaert G."/>
            <person name="Aert R."/>
            <person name="Robben J."/>
            <person name="Grymonprez B."/>
            <person name="Weltjens I."/>
            <person name="Vanstreels E."/>
            <person name="Rieger M."/>
            <person name="Schaefer M."/>
            <person name="Mueller-Auer S."/>
            <person name="Gabel C."/>
            <person name="Fuchs M."/>
            <person name="Duesterhoeft A."/>
            <person name="Fritzc C."/>
            <person name="Holzer E."/>
            <person name="Moestl D."/>
            <person name="Hilbert H."/>
            <person name="Borzym K."/>
            <person name="Langer I."/>
            <person name="Beck A."/>
            <person name="Lehrach H."/>
            <person name="Reinhardt R."/>
            <person name="Pohl T.M."/>
            <person name="Eger P."/>
            <person name="Zimmermann W."/>
            <person name="Wedler H."/>
            <person name="Wambutt R."/>
            <person name="Purnelle B."/>
            <person name="Goffeau A."/>
            <person name="Cadieu E."/>
            <person name="Dreano S."/>
            <person name="Gloux S."/>
            <person name="Lelaure V."/>
            <person name="Mottier S."/>
            <person name="Galibert F."/>
            <person name="Aves S.J."/>
            <person name="Xiang Z."/>
            <person name="Hunt C."/>
            <person name="Moore K."/>
            <person name="Hurst S.M."/>
            <person name="Lucas M."/>
            <person name="Rochet M."/>
            <person name="Gaillardin C."/>
            <person name="Tallada V.A."/>
            <person name="Garzon A."/>
            <person name="Thode G."/>
            <person name="Daga R.R."/>
            <person name="Cruzado L."/>
            <person name="Jimenez J."/>
            <person name="Sanchez M."/>
            <person name="del Rey F."/>
            <person name="Benito J."/>
            <person name="Dominguez A."/>
            <person name="Revuelta J.L."/>
            <person name="Moreno S."/>
            <person name="Armstrong J."/>
            <person name="Forsburg S.L."/>
            <person name="Cerutti L."/>
            <person name="Lowe T."/>
            <person name="McCombie W.R."/>
            <person name="Paulsen I."/>
            <person name="Potashkin J."/>
            <person name="Shpakovski G.V."/>
            <person name="Ussery D."/>
            <person name="Barrell B.G."/>
            <person name="Nurse P."/>
        </authorList>
    </citation>
    <scope>NUCLEOTIDE SEQUENCE [LARGE SCALE GENOMIC DNA]</scope>
    <source>
        <strain>972 / ATCC 24843</strain>
    </source>
</reference>
<reference key="2">
    <citation type="journal article" date="2000" name="Genes Cells">
        <title>Large-scale screening of intracellular protein localization in living fission yeast cells by the use of a GFP-fusion genomic DNA library.</title>
        <authorList>
            <person name="Ding D.-Q."/>
            <person name="Tomita Y."/>
            <person name="Yamamoto A."/>
            <person name="Chikashige Y."/>
            <person name="Haraguchi T."/>
            <person name="Hiraoka Y."/>
        </authorList>
    </citation>
    <scope>NUCLEOTIDE SEQUENCE [LARGE SCALE GENOMIC DNA] OF 1-102</scope>
    <source>
        <strain>ATCC 38364 / 968</strain>
    </source>
</reference>
<comment type="function">
    <text evidence="1">Catalyzes the release of fatty acids from lysophospholipids.</text>
</comment>
<comment type="catalytic activity">
    <reaction>
        <text>a 1-acyl-sn-glycero-3-phosphocholine + H2O = sn-glycerol 3-phosphocholine + a fatty acid + H(+)</text>
        <dbReference type="Rhea" id="RHEA:15177"/>
        <dbReference type="ChEBI" id="CHEBI:15377"/>
        <dbReference type="ChEBI" id="CHEBI:15378"/>
        <dbReference type="ChEBI" id="CHEBI:16870"/>
        <dbReference type="ChEBI" id="CHEBI:28868"/>
        <dbReference type="ChEBI" id="CHEBI:58168"/>
        <dbReference type="EC" id="3.1.1.5"/>
    </reaction>
</comment>
<comment type="subcellular location">
    <subcellularLocation>
        <location evidence="4">Secreted</location>
    </subcellularLocation>
</comment>
<comment type="similarity">
    <text evidence="4">Belongs to the lysophospholipase family.</text>
</comment>
<evidence type="ECO:0000250" key="1"/>
<evidence type="ECO:0000255" key="2"/>
<evidence type="ECO:0000255" key="3">
    <source>
        <dbReference type="PROSITE-ProRule" id="PRU00555"/>
    </source>
</evidence>
<evidence type="ECO:0000305" key="4"/>
<evidence type="ECO:0000312" key="5">
    <source>
        <dbReference type="PomBase" id="SPAC1786.02"/>
    </source>
</evidence>
<organism>
    <name type="scientific">Schizosaccharomyces pombe (strain 972 / ATCC 24843)</name>
    <name type="common">Fission yeast</name>
    <dbReference type="NCBI Taxonomy" id="284812"/>
    <lineage>
        <taxon>Eukaryota</taxon>
        <taxon>Fungi</taxon>
        <taxon>Dikarya</taxon>
        <taxon>Ascomycota</taxon>
        <taxon>Taphrinomycotina</taxon>
        <taxon>Schizosaccharomycetes</taxon>
        <taxon>Schizosaccharomycetales</taxon>
        <taxon>Schizosaccharomycetaceae</taxon>
        <taxon>Schizosaccharomyces</taxon>
    </lineage>
</organism>
<sequence>MYFQSFYFLALLLATAVYGQVASPELHSLSRRNWKKPPPFPSTNASYAPVIRSCDSSEIMVNSLPRGELPDLENDFIEKRLSNANEALTTFLQSKNTTADLDLSSIVGDNGPRLGIAVSGGGWRSMLFGGGALAALDSRSNETTLGGLLQSAHYITGADGGSWLLSSLAVNEFRTIQNISKSIWYTRLGIFFIEETHFGDLKNYYTNVVDEVNQKAAAGFNVSLTDYWGRAIARHFVGQLRGGPNLTYSSVQNASWFQTAEYPYPLIVTQGLTGGLPDGSNGTATNSSIYEISPYYLTSFDNNVRSYTPTQYLGTNYSNGTAVDGKCVTQFDNVGFLVGTSSTRYNEALIDVSLRQSRMSRRLGFTLRHMRINGSSVSFYPNPYTDATDIAGNATAVSEDIVDTPYLDLFDGGYDGQNIPIWPLLQPERKLDVVFAFDSSGDTSNFWPNGSSLVATYERVTQRASDAVYDVEDFVHVPTPETFVNLGLNANPTFFGCDGRNTTRGDVPVDHNTPPLVVYMPNTPWTMKSNLVDHRYRIANSEIQALIQNGFVATTQDNSTDFASCLACAVVQRSLERRNQSTSAACQQCFSQYCWNGTVDNTPVDDDSKNPTYNPAVKTSSASGVHANILLSFFVLLATLLVTA</sequence>
<accession>Q9UTH5</accession>
<accession>Q9UTZ2</accession>
<proteinExistence type="inferred from homology"/>
<name>PLB2_SCHPO</name>
<feature type="signal peptide" evidence="2">
    <location>
        <begin position="1"/>
        <end position="19"/>
    </location>
</feature>
<feature type="chain" id="PRO_0000024644" description="Probable lysophospholipase 2">
    <location>
        <begin position="20"/>
        <end position="644"/>
    </location>
</feature>
<feature type="domain" description="PLA2c" evidence="3">
    <location>
        <begin position="53"/>
        <end position="600"/>
    </location>
</feature>
<feature type="glycosylation site" description="N-linked (GlcNAc...) asparagine" evidence="2">
    <location>
        <position position="44"/>
    </location>
</feature>
<feature type="glycosylation site" description="N-linked (GlcNAc...) asparagine" evidence="2">
    <location>
        <position position="96"/>
    </location>
</feature>
<feature type="glycosylation site" description="N-linked (GlcNAc...) asparagine" evidence="2">
    <location>
        <position position="141"/>
    </location>
</feature>
<feature type="glycosylation site" description="N-linked (GlcNAc...) asparagine" evidence="2">
    <location>
        <position position="178"/>
    </location>
</feature>
<feature type="glycosylation site" description="N-linked (GlcNAc...) asparagine" evidence="2">
    <location>
        <position position="221"/>
    </location>
</feature>
<feature type="glycosylation site" description="N-linked (GlcNAc...) asparagine" evidence="2">
    <location>
        <position position="245"/>
    </location>
</feature>
<feature type="glycosylation site" description="N-linked (GlcNAc...) asparagine" evidence="2">
    <location>
        <position position="253"/>
    </location>
</feature>
<feature type="glycosylation site" description="N-linked (GlcNAc...) asparagine" evidence="2">
    <location>
        <position position="281"/>
    </location>
</feature>
<feature type="glycosylation site" description="N-linked (GlcNAc...) asparagine" evidence="2">
    <location>
        <position position="286"/>
    </location>
</feature>
<feature type="glycosylation site" description="N-linked (GlcNAc...) asparagine" evidence="2">
    <location>
        <position position="316"/>
    </location>
</feature>
<feature type="glycosylation site" description="N-linked (GlcNAc...) asparagine" evidence="2">
    <location>
        <position position="319"/>
    </location>
</feature>
<feature type="glycosylation site" description="N-linked (GlcNAc...) asparagine" evidence="2">
    <location>
        <position position="373"/>
    </location>
</feature>
<feature type="glycosylation site" description="N-linked (GlcNAc...) asparagine" evidence="2">
    <location>
        <position position="393"/>
    </location>
</feature>
<feature type="glycosylation site" description="N-linked (GlcNAc...) asparagine" evidence="2">
    <location>
        <position position="449"/>
    </location>
</feature>
<feature type="glycosylation site" description="N-linked (GlcNAc...) asparagine" evidence="2">
    <location>
        <position position="501"/>
    </location>
</feature>
<feature type="glycosylation site" description="N-linked (GlcNAc...) asparagine" evidence="2">
    <location>
        <position position="558"/>
    </location>
</feature>
<feature type="glycosylation site" description="N-linked (GlcNAc...) asparagine" evidence="2">
    <location>
        <position position="579"/>
    </location>
</feature>
<feature type="glycosylation site" description="N-linked (GlcNAc...) asparagine" evidence="2">
    <location>
        <position position="596"/>
    </location>
</feature>
<protein>
    <recommendedName>
        <fullName>Probable lysophospholipase 2</fullName>
        <ecNumber>3.1.1.5</ecNumber>
    </recommendedName>
    <alternativeName>
        <fullName>Phospholipase B</fullName>
    </alternativeName>
</protein>
<dbReference type="EC" id="3.1.1.5"/>
<dbReference type="EMBL" id="CU329670">
    <property type="protein sequence ID" value="CAB57433.1"/>
    <property type="molecule type" value="Genomic_DNA"/>
</dbReference>
<dbReference type="EMBL" id="AB027917">
    <property type="protein sequence ID" value="BAA87221.1"/>
    <property type="molecule type" value="Genomic_DNA"/>
</dbReference>
<dbReference type="PIR" id="T37800">
    <property type="entry name" value="T37800"/>
</dbReference>
<dbReference type="RefSeq" id="NP_594024.1">
    <property type="nucleotide sequence ID" value="NM_001019449.2"/>
</dbReference>
<dbReference type="SMR" id="Q9UTH5"/>
<dbReference type="BioGRID" id="278640">
    <property type="interactions" value="1"/>
</dbReference>
<dbReference type="FunCoup" id="Q9UTH5">
    <property type="interactions" value="201"/>
</dbReference>
<dbReference type="STRING" id="284812.Q9UTH5"/>
<dbReference type="iPTMnet" id="Q9UTH5"/>
<dbReference type="PaxDb" id="4896-SPAC1786.02.1"/>
<dbReference type="EnsemblFungi" id="SPAC1786.02.1">
    <property type="protein sequence ID" value="SPAC1786.02.1:pep"/>
    <property type="gene ID" value="SPAC1786.02"/>
</dbReference>
<dbReference type="GeneID" id="2542164"/>
<dbReference type="KEGG" id="spo:2542164"/>
<dbReference type="PomBase" id="SPAC1786.02">
    <property type="gene designation" value="plb2"/>
</dbReference>
<dbReference type="VEuPathDB" id="FungiDB:SPAC1786.02"/>
<dbReference type="eggNOG" id="KOG1325">
    <property type="taxonomic scope" value="Eukaryota"/>
</dbReference>
<dbReference type="HOGENOM" id="CLU_014602_0_0_1"/>
<dbReference type="InParanoid" id="Q9UTH5"/>
<dbReference type="OMA" id="FASCLAC"/>
<dbReference type="PhylomeDB" id="Q9UTH5"/>
<dbReference type="Reactome" id="R-SPO-111995">
    <property type="pathway name" value="phospho-PLA2 pathway"/>
</dbReference>
<dbReference type="Reactome" id="R-SPO-1482788">
    <property type="pathway name" value="Acyl chain remodelling of PC"/>
</dbReference>
<dbReference type="Reactome" id="R-SPO-1482798">
    <property type="pathway name" value="Acyl chain remodeling of CL"/>
</dbReference>
<dbReference type="Reactome" id="R-SPO-1482801">
    <property type="pathway name" value="Acyl chain remodelling of PS"/>
</dbReference>
<dbReference type="Reactome" id="R-SPO-1482839">
    <property type="pathway name" value="Acyl chain remodelling of PE"/>
</dbReference>
<dbReference type="Reactome" id="R-SPO-1482922">
    <property type="pathway name" value="Acyl chain remodelling of PI"/>
</dbReference>
<dbReference type="Reactome" id="R-SPO-1482925">
    <property type="pathway name" value="Acyl chain remodelling of PG"/>
</dbReference>
<dbReference type="Reactome" id="R-SPO-1483115">
    <property type="pathway name" value="Hydrolysis of LPC"/>
</dbReference>
<dbReference type="Reactome" id="R-SPO-1483152">
    <property type="pathway name" value="Hydrolysis of LPE"/>
</dbReference>
<dbReference type="Reactome" id="R-SPO-1483166">
    <property type="pathway name" value="Synthesis of PA"/>
</dbReference>
<dbReference type="Reactome" id="R-SPO-2142753">
    <property type="pathway name" value="Arachidonate metabolism"/>
</dbReference>
<dbReference type="Reactome" id="R-SPO-418592">
    <property type="pathway name" value="ADP signalling through P2Y purinoceptor 1"/>
</dbReference>
<dbReference type="Reactome" id="R-SPO-432142">
    <property type="pathway name" value="Platelet sensitization by LDL"/>
</dbReference>
<dbReference type="Reactome" id="R-SPO-6811436">
    <property type="pathway name" value="COPI-independent Golgi-to-ER retrograde traffic"/>
</dbReference>
<dbReference type="PRO" id="PR:Q9UTH5"/>
<dbReference type="Proteomes" id="UP000002485">
    <property type="component" value="Chromosome I"/>
</dbReference>
<dbReference type="GO" id="GO:0005829">
    <property type="term" value="C:cytosol"/>
    <property type="evidence" value="ECO:0000318"/>
    <property type="project" value="GO_Central"/>
</dbReference>
<dbReference type="GO" id="GO:0005783">
    <property type="term" value="C:endoplasmic reticulum"/>
    <property type="evidence" value="ECO:0007005"/>
    <property type="project" value="PomBase"/>
</dbReference>
<dbReference type="GO" id="GO:0009897">
    <property type="term" value="C:external side of plasma membrane"/>
    <property type="evidence" value="ECO:0000304"/>
    <property type="project" value="PomBase"/>
</dbReference>
<dbReference type="GO" id="GO:0005576">
    <property type="term" value="C:extracellular region"/>
    <property type="evidence" value="ECO:0007669"/>
    <property type="project" value="UniProtKB-SubCell"/>
</dbReference>
<dbReference type="GO" id="GO:0009277">
    <property type="term" value="C:fungal-type cell wall"/>
    <property type="evidence" value="ECO:0000250"/>
    <property type="project" value="PomBase"/>
</dbReference>
<dbReference type="GO" id="GO:0004622">
    <property type="term" value="F:lysophospholipase activity"/>
    <property type="evidence" value="ECO:0007669"/>
    <property type="project" value="UniProtKB-EC"/>
</dbReference>
<dbReference type="GO" id="GO:0004623">
    <property type="term" value="F:phospholipase A2 activity"/>
    <property type="evidence" value="ECO:0000318"/>
    <property type="project" value="GO_Central"/>
</dbReference>
<dbReference type="GO" id="GO:0046475">
    <property type="term" value="P:glycerophospholipid catabolic process"/>
    <property type="evidence" value="ECO:0000318"/>
    <property type="project" value="GO_Central"/>
</dbReference>
<dbReference type="CDD" id="cd07203">
    <property type="entry name" value="cPLA2_Fungal_PLB"/>
    <property type="match status" value="1"/>
</dbReference>
<dbReference type="FunFam" id="3.40.1090.10:FF:000010">
    <property type="entry name" value="Lysophospholipase"/>
    <property type="match status" value="1"/>
</dbReference>
<dbReference type="Gene3D" id="3.40.1090.10">
    <property type="entry name" value="Cytosolic phospholipase A2 catalytic domain"/>
    <property type="match status" value="1"/>
</dbReference>
<dbReference type="InterPro" id="IPR016035">
    <property type="entry name" value="Acyl_Trfase/lysoPLipase"/>
</dbReference>
<dbReference type="InterPro" id="IPR002642">
    <property type="entry name" value="LysoPLipase_cat_dom"/>
</dbReference>
<dbReference type="PANTHER" id="PTHR10728">
    <property type="entry name" value="CYTOSOLIC PHOSPHOLIPASE A2"/>
    <property type="match status" value="1"/>
</dbReference>
<dbReference type="PANTHER" id="PTHR10728:SF60">
    <property type="entry name" value="LYSOPHOSPHOLIPASE C1786.02-RELATED"/>
    <property type="match status" value="1"/>
</dbReference>
<dbReference type="Pfam" id="PF01735">
    <property type="entry name" value="PLA2_B"/>
    <property type="match status" value="1"/>
</dbReference>
<dbReference type="SMART" id="SM00022">
    <property type="entry name" value="PLAc"/>
    <property type="match status" value="1"/>
</dbReference>
<dbReference type="SUPFAM" id="SSF52151">
    <property type="entry name" value="FabD/lysophospholipase-like"/>
    <property type="match status" value="1"/>
</dbReference>
<dbReference type="PROSITE" id="PS51210">
    <property type="entry name" value="PLA2C"/>
    <property type="match status" value="1"/>
</dbReference>
<keyword id="KW-0325">Glycoprotein</keyword>
<keyword id="KW-0378">Hydrolase</keyword>
<keyword id="KW-0442">Lipid degradation</keyword>
<keyword id="KW-0443">Lipid metabolism</keyword>
<keyword id="KW-1185">Reference proteome</keyword>
<keyword id="KW-0964">Secreted</keyword>
<keyword id="KW-0732">Signal</keyword>